<proteinExistence type="inferred from homology"/>
<reference key="1">
    <citation type="journal article" date="2002" name="Nature">
        <title>Genome sequence of the plant pathogen Ralstonia solanacearum.</title>
        <authorList>
            <person name="Salanoubat M."/>
            <person name="Genin S."/>
            <person name="Artiguenave F."/>
            <person name="Gouzy J."/>
            <person name="Mangenot S."/>
            <person name="Arlat M."/>
            <person name="Billault A."/>
            <person name="Brottier P."/>
            <person name="Camus J.-C."/>
            <person name="Cattolico L."/>
            <person name="Chandler M."/>
            <person name="Choisne N."/>
            <person name="Claudel-Renard C."/>
            <person name="Cunnac S."/>
            <person name="Demange N."/>
            <person name="Gaspin C."/>
            <person name="Lavie M."/>
            <person name="Moisan A."/>
            <person name="Robert C."/>
            <person name="Saurin W."/>
            <person name="Schiex T."/>
            <person name="Siguier P."/>
            <person name="Thebault P."/>
            <person name="Whalen M."/>
            <person name="Wincker P."/>
            <person name="Levy M."/>
            <person name="Weissenbach J."/>
            <person name="Boucher C.A."/>
        </authorList>
    </citation>
    <scope>NUCLEOTIDE SEQUENCE [LARGE SCALE GENOMIC DNA]</scope>
    <source>
        <strain>ATCC BAA-1114 / GMI1000</strain>
    </source>
</reference>
<organism>
    <name type="scientific">Ralstonia nicotianae (strain ATCC BAA-1114 / GMI1000)</name>
    <name type="common">Ralstonia solanacearum</name>
    <dbReference type="NCBI Taxonomy" id="267608"/>
    <lineage>
        <taxon>Bacteria</taxon>
        <taxon>Pseudomonadati</taxon>
        <taxon>Pseudomonadota</taxon>
        <taxon>Betaproteobacteria</taxon>
        <taxon>Burkholderiales</taxon>
        <taxon>Burkholderiaceae</taxon>
        <taxon>Ralstonia</taxon>
        <taxon>Ralstonia solanacearum species complex</taxon>
    </lineage>
</organism>
<protein>
    <recommendedName>
        <fullName evidence="1">LPS-assembly protein LptD</fullName>
    </recommendedName>
</protein>
<keyword id="KW-0998">Cell outer membrane</keyword>
<keyword id="KW-0472">Membrane</keyword>
<keyword id="KW-1185">Reference proteome</keyword>
<keyword id="KW-0732">Signal</keyword>
<dbReference type="EMBL" id="AL646052">
    <property type="protein sequence ID" value="CAD14043.1"/>
    <property type="molecule type" value="Genomic_DNA"/>
</dbReference>
<dbReference type="RefSeq" id="WP_011000474.1">
    <property type="nucleotide sequence ID" value="NC_003295.1"/>
</dbReference>
<dbReference type="SMR" id="Q8Y221"/>
<dbReference type="STRING" id="267608.RSc0515"/>
<dbReference type="EnsemblBacteria" id="CAD14043">
    <property type="protein sequence ID" value="CAD14043"/>
    <property type="gene ID" value="RSc0515"/>
</dbReference>
<dbReference type="KEGG" id="rso:RSc0515"/>
<dbReference type="eggNOG" id="COG1452">
    <property type="taxonomic scope" value="Bacteria"/>
</dbReference>
<dbReference type="HOGENOM" id="CLU_009039_0_0_4"/>
<dbReference type="Proteomes" id="UP000001436">
    <property type="component" value="Chromosome"/>
</dbReference>
<dbReference type="GO" id="GO:0009279">
    <property type="term" value="C:cell outer membrane"/>
    <property type="evidence" value="ECO:0007669"/>
    <property type="project" value="UniProtKB-SubCell"/>
</dbReference>
<dbReference type="GO" id="GO:1990351">
    <property type="term" value="C:transporter complex"/>
    <property type="evidence" value="ECO:0007669"/>
    <property type="project" value="TreeGrafter"/>
</dbReference>
<dbReference type="GO" id="GO:0043165">
    <property type="term" value="P:Gram-negative-bacterium-type cell outer membrane assembly"/>
    <property type="evidence" value="ECO:0007669"/>
    <property type="project" value="UniProtKB-UniRule"/>
</dbReference>
<dbReference type="GO" id="GO:0015920">
    <property type="term" value="P:lipopolysaccharide transport"/>
    <property type="evidence" value="ECO:0007669"/>
    <property type="project" value="InterPro"/>
</dbReference>
<dbReference type="HAMAP" id="MF_01411">
    <property type="entry name" value="LPS_assembly_LptD"/>
    <property type="match status" value="1"/>
</dbReference>
<dbReference type="InterPro" id="IPR020889">
    <property type="entry name" value="LipoPS_assembly_LptD"/>
</dbReference>
<dbReference type="InterPro" id="IPR050218">
    <property type="entry name" value="LptD"/>
</dbReference>
<dbReference type="InterPro" id="IPR007543">
    <property type="entry name" value="LptD_C"/>
</dbReference>
<dbReference type="PANTHER" id="PTHR30189">
    <property type="entry name" value="LPS-ASSEMBLY PROTEIN"/>
    <property type="match status" value="1"/>
</dbReference>
<dbReference type="PANTHER" id="PTHR30189:SF1">
    <property type="entry name" value="LPS-ASSEMBLY PROTEIN LPTD"/>
    <property type="match status" value="1"/>
</dbReference>
<dbReference type="Pfam" id="PF04453">
    <property type="entry name" value="LptD"/>
    <property type="match status" value="1"/>
</dbReference>
<evidence type="ECO:0000255" key="1">
    <source>
        <dbReference type="HAMAP-Rule" id="MF_01411"/>
    </source>
</evidence>
<evidence type="ECO:0000256" key="2">
    <source>
        <dbReference type="SAM" id="MobiDB-lite"/>
    </source>
</evidence>
<sequence length="811" mass="90162">MTEPNRARKTRQRTAFAAPDQRTAPRRGALALRPLVFAVAGVWTAASAAQSQGATQQAASAQAPSSAASVTALAVSGPTTPGGAPLVPKMAEPVKRPDNAVPSFAAADAMDGRTNEDIHLRGHGELRRNGTVVKGDTLDYNQDTDFATATGNVRLFRDGTLVTGPDAALKVTANEGTMHTPSYEFHTVGGRGSAERIDFIDKDNSRITKGTYTTCSPDNVDWYFSASQIDIDSDRQVGSGRAGVLHFLGMPVFASPVFDFPLNDERRSGFLAPVFGYSSRSGADVTLPYYFNIAPNRDLTLYPRLLSQRGLQLGAEYRYLSQTYNGVLRGEFLPNDREADRNRWSIALVHNQRLATGLNAYVNYNKVSDSTYPDDLGRSIVTATQRQYTQEGGVTYSIGDWVALARVQKFQTLSTATTALSPPYERVPQLNLSYNRYDVGGFDINFQTDYTKFSIPTENTVQGERLFMQPTISYPIIRPGWFVTPKFILNTTSYRLDRPTGDTQASQINRTLPTVSLDSGLTFERDTPLVSKWFGRSYIQTLEPRLFYVYTPFRDQSQIPLFDTAQSDYNLGQIFTENPYTGYDRIADNNKLTAGVTTRFIESETGIERLRATLAQRLDFEGQRVTLAGSAPTSVRRYSDLLGATTIQMFRGIFFDTNLQYNQDIDRIMRSTMAFSWKPDANKVINLGYRYYRADANTGQLALEQTDISAQWPLTRRLYGLGRIGYDMDAKKPSDMLLGFEYVADCWVGRLAVQRYSNATSGYTTHIFAQIEFKGLSKVGNNPIDVIRLNVPGYQPVTAQPVTPSVLDQYE</sequence>
<gene>
    <name evidence="1" type="primary">lptD</name>
    <name type="synonym">imp</name>
    <name type="synonym">ostA</name>
    <name type="ordered locus">RSc0515</name>
</gene>
<comment type="function">
    <text evidence="1">Together with LptE, is involved in the assembly of lipopolysaccharide (LPS) at the surface of the outer membrane.</text>
</comment>
<comment type="subunit">
    <text evidence="1">Component of the lipopolysaccharide transport and assembly complex. Interacts with LptE and LptA.</text>
</comment>
<comment type="subcellular location">
    <subcellularLocation>
        <location evidence="1">Cell outer membrane</location>
    </subcellularLocation>
</comment>
<comment type="similarity">
    <text evidence="1">Belongs to the LptD family.</text>
</comment>
<accession>Q8Y221</accession>
<name>LPTD_RALN1</name>
<feature type="signal peptide" evidence="1">
    <location>
        <begin position="1"/>
        <end position="17"/>
    </location>
</feature>
<feature type="chain" id="PRO_0000281632" description="LPS-assembly protein LptD">
    <location>
        <begin position="18"/>
        <end position="811"/>
    </location>
</feature>
<feature type="region of interest" description="Disordered" evidence="2">
    <location>
        <begin position="1"/>
        <end position="22"/>
    </location>
</feature>